<sequence length="137" mass="15276">MARTILAFDFGTYSIGCAVGQDITGTAQGLPSFKAQDGIPNWDQIEKVIKEWQPERLVVGLPLNMDGSEQPLTQRAKKFANRLNGRFNLPVELQDERLTTVSAKAEIFERGGYKALKKDKVDSISACLILESWFEAQ</sequence>
<reference key="1">
    <citation type="journal article" date="2008" name="J. Bacteriol.">
        <title>The complete genome sequence of Actinobacillus pleuropneumoniae L20 (serotype 5b).</title>
        <authorList>
            <person name="Foote S.J."/>
            <person name="Bosse J.T."/>
            <person name="Bouevitch A.B."/>
            <person name="Langford P.R."/>
            <person name="Young N.M."/>
            <person name="Nash J.H.E."/>
        </authorList>
    </citation>
    <scope>NUCLEOTIDE SEQUENCE [LARGE SCALE GENOMIC DNA]</scope>
    <source>
        <strain>L20</strain>
    </source>
</reference>
<proteinExistence type="inferred from homology"/>
<accession>A3MYV3</accession>
<comment type="function">
    <text evidence="1">Could be a nuclease involved in processing of the 5'-end of pre-16S rRNA.</text>
</comment>
<comment type="subcellular location">
    <subcellularLocation>
        <location evidence="1">Cytoplasm</location>
    </subcellularLocation>
</comment>
<comment type="similarity">
    <text evidence="1">Belongs to the YqgF nuclease family.</text>
</comment>
<evidence type="ECO:0000255" key="1">
    <source>
        <dbReference type="HAMAP-Rule" id="MF_00651"/>
    </source>
</evidence>
<organism>
    <name type="scientific">Actinobacillus pleuropneumoniae serotype 5b (strain L20)</name>
    <dbReference type="NCBI Taxonomy" id="416269"/>
    <lineage>
        <taxon>Bacteria</taxon>
        <taxon>Pseudomonadati</taxon>
        <taxon>Pseudomonadota</taxon>
        <taxon>Gammaproteobacteria</taxon>
        <taxon>Pasteurellales</taxon>
        <taxon>Pasteurellaceae</taxon>
        <taxon>Actinobacillus</taxon>
    </lineage>
</organism>
<feature type="chain" id="PRO_1000061477" description="Putative pre-16S rRNA nuclease">
    <location>
        <begin position="1"/>
        <end position="137"/>
    </location>
</feature>
<name>YQGF_ACTP2</name>
<protein>
    <recommendedName>
        <fullName evidence="1">Putative pre-16S rRNA nuclease</fullName>
        <ecNumber evidence="1">3.1.-.-</ecNumber>
    </recommendedName>
</protein>
<keyword id="KW-0963">Cytoplasm</keyword>
<keyword id="KW-0378">Hydrolase</keyword>
<keyword id="KW-0540">Nuclease</keyword>
<keyword id="KW-1185">Reference proteome</keyword>
<keyword id="KW-0690">Ribosome biogenesis</keyword>
<gene>
    <name type="ordered locus">APL_0231</name>
</gene>
<dbReference type="EC" id="3.1.-.-" evidence="1"/>
<dbReference type="EMBL" id="CP000569">
    <property type="protein sequence ID" value="ABN73339.1"/>
    <property type="molecule type" value="Genomic_DNA"/>
</dbReference>
<dbReference type="SMR" id="A3MYV3"/>
<dbReference type="STRING" id="416269.APL_0231"/>
<dbReference type="EnsemblBacteria" id="ABN73339">
    <property type="protein sequence ID" value="ABN73339"/>
    <property type="gene ID" value="APL_0231"/>
</dbReference>
<dbReference type="KEGG" id="apl:APL_0231"/>
<dbReference type="eggNOG" id="COG0816">
    <property type="taxonomic scope" value="Bacteria"/>
</dbReference>
<dbReference type="HOGENOM" id="CLU_098240_3_0_6"/>
<dbReference type="Proteomes" id="UP000001432">
    <property type="component" value="Chromosome"/>
</dbReference>
<dbReference type="GO" id="GO:0005829">
    <property type="term" value="C:cytosol"/>
    <property type="evidence" value="ECO:0007669"/>
    <property type="project" value="TreeGrafter"/>
</dbReference>
<dbReference type="GO" id="GO:0004518">
    <property type="term" value="F:nuclease activity"/>
    <property type="evidence" value="ECO:0007669"/>
    <property type="project" value="UniProtKB-KW"/>
</dbReference>
<dbReference type="GO" id="GO:0000967">
    <property type="term" value="P:rRNA 5'-end processing"/>
    <property type="evidence" value="ECO:0007669"/>
    <property type="project" value="UniProtKB-UniRule"/>
</dbReference>
<dbReference type="CDD" id="cd16964">
    <property type="entry name" value="YqgF"/>
    <property type="match status" value="1"/>
</dbReference>
<dbReference type="FunFam" id="3.30.420.140:FF:000002">
    <property type="entry name" value="Putative pre-16S rRNA nuclease"/>
    <property type="match status" value="1"/>
</dbReference>
<dbReference type="Gene3D" id="3.30.420.140">
    <property type="entry name" value="YqgF/RNase H-like domain"/>
    <property type="match status" value="1"/>
</dbReference>
<dbReference type="HAMAP" id="MF_00651">
    <property type="entry name" value="Nuclease_YqgF"/>
    <property type="match status" value="1"/>
</dbReference>
<dbReference type="InterPro" id="IPR012337">
    <property type="entry name" value="RNaseH-like_sf"/>
</dbReference>
<dbReference type="InterPro" id="IPR005227">
    <property type="entry name" value="YqgF"/>
</dbReference>
<dbReference type="InterPro" id="IPR006641">
    <property type="entry name" value="YqgF/RNaseH-like_dom"/>
</dbReference>
<dbReference type="InterPro" id="IPR037027">
    <property type="entry name" value="YqgF/RNaseH-like_dom_sf"/>
</dbReference>
<dbReference type="NCBIfam" id="TIGR00250">
    <property type="entry name" value="RNAse_H_YqgF"/>
    <property type="match status" value="1"/>
</dbReference>
<dbReference type="PANTHER" id="PTHR33317">
    <property type="entry name" value="POLYNUCLEOTIDYL TRANSFERASE, RIBONUCLEASE H-LIKE SUPERFAMILY PROTEIN"/>
    <property type="match status" value="1"/>
</dbReference>
<dbReference type="PANTHER" id="PTHR33317:SF4">
    <property type="entry name" value="POLYNUCLEOTIDYL TRANSFERASE, RIBONUCLEASE H-LIKE SUPERFAMILY PROTEIN"/>
    <property type="match status" value="1"/>
</dbReference>
<dbReference type="Pfam" id="PF03652">
    <property type="entry name" value="RuvX"/>
    <property type="match status" value="1"/>
</dbReference>
<dbReference type="SMART" id="SM00732">
    <property type="entry name" value="YqgFc"/>
    <property type="match status" value="1"/>
</dbReference>
<dbReference type="SUPFAM" id="SSF53098">
    <property type="entry name" value="Ribonuclease H-like"/>
    <property type="match status" value="1"/>
</dbReference>